<evidence type="ECO:0000255" key="1">
    <source>
        <dbReference type="PROSITE-ProRule" id="PRU00680"/>
    </source>
</evidence>
<evidence type="ECO:0000269" key="2">
    <source>
    </source>
</evidence>
<evidence type="ECO:0000269" key="3">
    <source>
    </source>
</evidence>
<evidence type="ECO:0000305" key="4"/>
<evidence type="ECO:0007829" key="5">
    <source>
        <dbReference type="PDB" id="1LMQ"/>
    </source>
</evidence>
<feature type="signal peptide" evidence="2 3">
    <location>
        <begin position="1"/>
        <end position="15"/>
    </location>
</feature>
<feature type="chain" id="PRO_0000018501" description="Lysozyme C II">
    <location>
        <begin position="16"/>
        <end position="144"/>
    </location>
</feature>
<feature type="domain" description="C-type lysozyme" evidence="1">
    <location>
        <begin position="16"/>
        <end position="144"/>
    </location>
</feature>
<feature type="active site">
    <location>
        <position position="50"/>
    </location>
</feature>
<feature type="active site">
    <location>
        <position position="67"/>
    </location>
</feature>
<feature type="disulfide bond">
    <location>
        <begin position="21"/>
        <end position="142"/>
    </location>
</feature>
<feature type="disulfide bond">
    <location>
        <begin position="45"/>
        <end position="130"/>
    </location>
</feature>
<feature type="disulfide bond">
    <location>
        <begin position="79"/>
        <end position="95"/>
    </location>
</feature>
<feature type="disulfide bond">
    <location>
        <begin position="91"/>
        <end position="109"/>
    </location>
</feature>
<feature type="sequence conflict" description="In Ref. 3; AAG34564." evidence="4" ref="3">
    <original>R</original>
    <variation>H</variation>
    <location>
        <position position="94"/>
    </location>
</feature>
<feature type="sequence conflict" description="In Ref. 3; AAG34564." evidence="4" ref="3">
    <original>A</original>
    <variation>D</variation>
    <location>
        <position position="101"/>
    </location>
</feature>
<feature type="helix" evidence="5">
    <location>
        <begin position="20"/>
        <end position="29"/>
    </location>
</feature>
<feature type="helix" evidence="5">
    <location>
        <begin position="40"/>
        <end position="51"/>
    </location>
</feature>
<feature type="strand" evidence="5">
    <location>
        <begin position="58"/>
        <end position="60"/>
    </location>
</feature>
<feature type="strand" evidence="5">
    <location>
        <begin position="66"/>
        <end position="68"/>
    </location>
</feature>
<feature type="turn" evidence="5">
    <location>
        <begin position="69"/>
        <end position="72"/>
    </location>
</feature>
<feature type="turn" evidence="5">
    <location>
        <begin position="75"/>
        <end position="77"/>
    </location>
</feature>
<feature type="helix" evidence="5">
    <location>
        <begin position="95"/>
        <end position="98"/>
    </location>
</feature>
<feature type="strand" evidence="5">
    <location>
        <begin position="99"/>
        <end position="102"/>
    </location>
</feature>
<feature type="helix" evidence="5">
    <location>
        <begin position="104"/>
        <end position="113"/>
    </location>
</feature>
<feature type="helix" evidence="5">
    <location>
        <begin position="119"/>
        <end position="122"/>
    </location>
</feature>
<feature type="helix" evidence="5">
    <location>
        <begin position="124"/>
        <end position="129"/>
    </location>
</feature>
<feature type="turn" evidence="5">
    <location>
        <begin position="130"/>
        <end position="132"/>
    </location>
</feature>
<feature type="helix" evidence="5">
    <location>
        <begin position="136"/>
        <end position="138"/>
    </location>
</feature>
<feature type="turn" evidence="5">
    <location>
        <begin position="139"/>
        <end position="141"/>
    </location>
</feature>
<dbReference type="EC" id="3.2.1.17"/>
<dbReference type="EMBL" id="X59491">
    <property type="protein sequence ID" value="CAA42084.1"/>
    <property type="molecule type" value="mRNA"/>
</dbReference>
<dbReference type="EMBL" id="AF322106">
    <property type="protein sequence ID" value="AAG45933.1"/>
    <property type="molecule type" value="Genomic_DNA"/>
</dbReference>
<dbReference type="EMBL" id="AF452171">
    <property type="protein sequence ID" value="AAL48290.1"/>
    <property type="molecule type" value="Genomic_DNA"/>
</dbReference>
<dbReference type="EMBL" id="AF321519">
    <property type="protein sequence ID" value="AAG34564.1"/>
    <property type="molecule type" value="mRNA"/>
</dbReference>
<dbReference type="PIR" id="I51047">
    <property type="entry name" value="I51047"/>
</dbReference>
<dbReference type="RefSeq" id="NP_001118188.1">
    <property type="nucleotide sequence ID" value="NM_001124716.1"/>
</dbReference>
<dbReference type="RefSeq" id="XP_021457257.1">
    <property type="nucleotide sequence ID" value="XM_021601582.2"/>
</dbReference>
<dbReference type="PDB" id="1BB6">
    <property type="method" value="X-ray"/>
    <property type="resolution" value="2.00 A"/>
    <property type="chains" value="A=16-144"/>
</dbReference>
<dbReference type="PDB" id="1BB7">
    <property type="method" value="X-ray"/>
    <property type="resolution" value="2.00 A"/>
    <property type="chains" value="A=16-144"/>
</dbReference>
<dbReference type="PDB" id="1LMC">
    <property type="method" value="X-ray"/>
    <property type="resolution" value="2.00 A"/>
    <property type="chains" value="A=16-144"/>
</dbReference>
<dbReference type="PDB" id="1LMN">
    <property type="method" value="X-ray"/>
    <property type="resolution" value="1.80 A"/>
    <property type="chains" value="A=16-144"/>
</dbReference>
<dbReference type="PDB" id="1LMO">
    <property type="method" value="X-ray"/>
    <property type="resolution" value="1.80 A"/>
    <property type="chains" value="A=16-144"/>
</dbReference>
<dbReference type="PDB" id="1LMP">
    <property type="method" value="X-ray"/>
    <property type="resolution" value="2.00 A"/>
    <property type="chains" value="A=16-144"/>
</dbReference>
<dbReference type="PDB" id="1LMQ">
    <property type="method" value="X-ray"/>
    <property type="resolution" value="1.60 A"/>
    <property type="chains" value="A=16-144"/>
</dbReference>
<dbReference type="PDBsum" id="1BB6"/>
<dbReference type="PDBsum" id="1BB7"/>
<dbReference type="PDBsum" id="1LMC"/>
<dbReference type="PDBsum" id="1LMN"/>
<dbReference type="PDBsum" id="1LMO"/>
<dbReference type="PDBsum" id="1LMP"/>
<dbReference type="PDBsum" id="1LMQ"/>
<dbReference type="SMR" id="P11941"/>
<dbReference type="CAZy" id="GH22">
    <property type="family name" value="Glycoside Hydrolase Family 22"/>
</dbReference>
<dbReference type="Ensembl" id="ENSOMYT00000007960.2">
    <property type="protein sequence ID" value="ENSOMYP00000007146.1"/>
    <property type="gene ID" value="ENSOMYG00000003648.2"/>
</dbReference>
<dbReference type="Ensembl" id="ENSOMYT00000007974.2">
    <property type="protein sequence ID" value="ENSOMYP00000007157.1"/>
    <property type="gene ID" value="ENSOMYG00000065270.1"/>
</dbReference>
<dbReference type="Ensembl" id="ENSOMYT00000007994.2">
    <property type="protein sequence ID" value="ENSOMYP00000007177.2"/>
    <property type="gene ID" value="ENSOMYG00000003648.2"/>
</dbReference>
<dbReference type="GeneID" id="100136768"/>
<dbReference type="GeneID" id="110523157"/>
<dbReference type="KEGG" id="omy:100136768"/>
<dbReference type="CTD" id="17105"/>
<dbReference type="GeneTree" id="ENSGT00940000153832"/>
<dbReference type="OrthoDB" id="17373at2759"/>
<dbReference type="EvolutionaryTrace" id="P11941"/>
<dbReference type="Proteomes" id="UP000694395">
    <property type="component" value="Chromosome 5"/>
</dbReference>
<dbReference type="GO" id="GO:0005615">
    <property type="term" value="C:extracellular space"/>
    <property type="evidence" value="ECO:0000314"/>
    <property type="project" value="AgBase"/>
</dbReference>
<dbReference type="GO" id="GO:0003796">
    <property type="term" value="F:lysozyme activity"/>
    <property type="evidence" value="ECO:0000314"/>
    <property type="project" value="AgBase"/>
</dbReference>
<dbReference type="GO" id="GO:0050829">
    <property type="term" value="P:defense response to Gram-negative bacterium"/>
    <property type="evidence" value="ECO:0007669"/>
    <property type="project" value="TreeGrafter"/>
</dbReference>
<dbReference type="GO" id="GO:0050830">
    <property type="term" value="P:defense response to Gram-positive bacterium"/>
    <property type="evidence" value="ECO:0007669"/>
    <property type="project" value="TreeGrafter"/>
</dbReference>
<dbReference type="GO" id="GO:0031640">
    <property type="term" value="P:killing of cells of another organism"/>
    <property type="evidence" value="ECO:0007669"/>
    <property type="project" value="UniProtKB-KW"/>
</dbReference>
<dbReference type="CDD" id="cd16897">
    <property type="entry name" value="LYZ_C"/>
    <property type="match status" value="1"/>
</dbReference>
<dbReference type="FunFam" id="1.10.530.10:FF:000001">
    <property type="entry name" value="Lysozyme C"/>
    <property type="match status" value="1"/>
</dbReference>
<dbReference type="Gene3D" id="1.10.530.10">
    <property type="match status" value="1"/>
</dbReference>
<dbReference type="InterPro" id="IPR001916">
    <property type="entry name" value="Glyco_hydro_22"/>
</dbReference>
<dbReference type="InterPro" id="IPR019799">
    <property type="entry name" value="Glyco_hydro_22_CS"/>
</dbReference>
<dbReference type="InterPro" id="IPR000974">
    <property type="entry name" value="Glyco_hydro_22_lys"/>
</dbReference>
<dbReference type="InterPro" id="IPR023346">
    <property type="entry name" value="Lysozyme-like_dom_sf"/>
</dbReference>
<dbReference type="PANTHER" id="PTHR11407">
    <property type="entry name" value="LYSOZYME C"/>
    <property type="match status" value="1"/>
</dbReference>
<dbReference type="PANTHER" id="PTHR11407:SF28">
    <property type="entry name" value="LYSOZYME C"/>
    <property type="match status" value="1"/>
</dbReference>
<dbReference type="Pfam" id="PF00062">
    <property type="entry name" value="Lys"/>
    <property type="match status" value="1"/>
</dbReference>
<dbReference type="PRINTS" id="PR00137">
    <property type="entry name" value="LYSOZYME"/>
</dbReference>
<dbReference type="PRINTS" id="PR00135">
    <property type="entry name" value="LYZLACT"/>
</dbReference>
<dbReference type="SMART" id="SM00263">
    <property type="entry name" value="LYZ1"/>
    <property type="match status" value="1"/>
</dbReference>
<dbReference type="SUPFAM" id="SSF53955">
    <property type="entry name" value="Lysozyme-like"/>
    <property type="match status" value="1"/>
</dbReference>
<dbReference type="PROSITE" id="PS00128">
    <property type="entry name" value="GLYCOSYL_HYDROL_F22_1"/>
    <property type="match status" value="1"/>
</dbReference>
<dbReference type="PROSITE" id="PS51348">
    <property type="entry name" value="GLYCOSYL_HYDROL_F22_2"/>
    <property type="match status" value="1"/>
</dbReference>
<comment type="function">
    <text evidence="1 2">Lysozymes have primarily a bacteriolytic function; those in tissues and body fluids are associated with the monocyte-macrophage system and enhance the activity of immunoagents. Has antibacterial activity against the Gram positive bacterium P.citreus. Has no antibacterial activity against the Gram negative bacteria E.coli and Y.ruckeri. Does not have hemolytic activity against trout erythrocytes.</text>
</comment>
<comment type="catalytic activity">
    <reaction evidence="2">
        <text>Hydrolysis of (1-&gt;4)-beta-linkages between N-acetylmuramic acid and N-acetyl-D-glucosamine residues in a peptidoglycan and between N-acetyl-D-glucosamine residues in chitodextrins.</text>
        <dbReference type="EC" id="3.2.1.17"/>
    </reaction>
</comment>
<comment type="biophysicochemical properties">
    <phDependence>
        <text evidence="2">Optimum pH is 4.5-5.5. No activity above pH 8.8.</text>
    </phDependence>
    <temperatureDependence>
        <text evidence="2">Optimum temperature is 33-49 degrees Celsius. Retains 25% of its maximal activity after heating 10 minutes at 80 degrees Celsius.</text>
    </temperatureDependence>
</comment>
<comment type="subcellular location">
    <subcellularLocation>
        <location>Secreted</location>
    </subcellularLocation>
</comment>
<comment type="mass spectrometry" mass="14252.0" method="MALDI" evidence="2"/>
<comment type="similarity">
    <text evidence="1">Belongs to the glycosyl hydrolase 22 family.</text>
</comment>
<proteinExistence type="evidence at protein level"/>
<name>LYSC2_ONCMY</name>
<keyword id="KW-0002">3D-structure</keyword>
<keyword id="KW-0044">Antibiotic</keyword>
<keyword id="KW-0929">Antimicrobial</keyword>
<keyword id="KW-0081">Bacteriolytic enzyme</keyword>
<keyword id="KW-0903">Direct protein sequencing</keyword>
<keyword id="KW-1015">Disulfide bond</keyword>
<keyword id="KW-0326">Glycosidase</keyword>
<keyword id="KW-0378">Hydrolase</keyword>
<keyword id="KW-0964">Secreted</keyword>
<keyword id="KW-0732">Signal</keyword>
<accession>P11941</accession>
<accession>P83333</accession>
<accession>Q9DDK3</accession>
<protein>
    <recommendedName>
        <fullName>Lysozyme C II</fullName>
        <ecNumber>3.2.1.17</ecNumber>
    </recommendedName>
    <alternativeName>
        <fullName>1,4-beta-N-acetylmuramidase C</fullName>
    </alternativeName>
    <alternativeName>
        <fullName>Lysozyme type II</fullName>
    </alternativeName>
</protein>
<reference key="1">
    <citation type="journal article" date="1991" name="J. Mol. Evol.">
        <title>cDNA and amino acid sequences of rainbow trout (Oncorhynchus mykiss) lysozymes and their implications for the evolution of lysozyme and lactalbumin.</title>
        <authorList>
            <person name="Dautingny A."/>
            <person name="Prager E.M."/>
            <person name="Pham-Dinh D."/>
            <person name="Jolles J."/>
            <person name="Pakdel F."/>
            <person name="Grinde B."/>
            <person name="Jolles P."/>
        </authorList>
    </citation>
    <scope>NUCLEOTIDE SEQUENCE [MRNA]</scope>
    <source>
        <tissue>Liver</tissue>
    </source>
</reference>
<reference key="2">
    <citation type="journal article" date="2003" name="Anim. Biotechnol.">
        <title>Molecular characterization of lysozyme type II gene from rainbow trout (Oncorhynchus mykiss): an evidence of a duplicate gene.</title>
        <authorList>
            <person name="Mitra A."/>
            <person name="Foster-Frey J."/>
            <person name="Wells K.D."/>
            <person name="Rexroad C.E. III"/>
            <person name="Wall R.J."/>
        </authorList>
    </citation>
    <scope>NUCLEOTIDE SEQUENCE [GENOMIC DNA]</scope>
    <source>
        <strain>Kamploop</strain>
        <tissue>Kidney</tissue>
    </source>
</reference>
<reference key="3">
    <citation type="submission" date="2000-11" db="EMBL/GenBank/DDBJ databases">
        <title>A new genetic variant of lysozyme from rainbow trout.</title>
        <authorList>
            <person name="Mitra A."/>
            <person name="Wells K.D."/>
            <person name="Rexroad C.E. III"/>
            <person name="Wall R.J."/>
        </authorList>
    </citation>
    <scope>NUCLEOTIDE SEQUENCE [MRNA]</scope>
    <source>
        <tissue>Kidney</tissue>
    </source>
</reference>
<reference key="4">
    <citation type="journal article" date="1988" name="Eur. J. Biochem.">
        <title>Purification and characterization of two lysozymes from rainbow trout (Salmo gairdneri).</title>
        <authorList>
            <person name="Grinde B."/>
            <person name="Jolles J."/>
            <person name="Jolles P."/>
        </authorList>
    </citation>
    <scope>PROTEIN SEQUENCE OF 16-50</scope>
</reference>
<reference key="5">
    <citation type="journal article" date="2004" name="Comp. Biochem. Physiol.">
        <title>Two novel muramidases from skin mucosa of rainbow trout (Oncorhynchus mykiss).</title>
        <authorList>
            <person name="Fernandes J.M.O."/>
            <person name="Kemp G.D."/>
            <person name="Smith V.J."/>
        </authorList>
    </citation>
    <scope>PROTEIN SEQUENCE OF 16-30</scope>
    <scope>FUNCTION</scope>
    <scope>CATALYTIC ACTIVITY</scope>
    <scope>BIOPHYSICOCHEMICAL PROPERTIES</scope>
    <scope>MASS SPECTROMETRY</scope>
    <source>
        <tissue>Skin mucus</tissue>
    </source>
</reference>
<reference key="6">
    <citation type="journal article" date="1995" name="Acta Crystallogr. D">
        <title>Refined crystal structure of lysozyme from the rainbow trout (Oncorhynchus mykiss).</title>
        <authorList>
            <person name="Karlsen S."/>
            <person name="Eliassen B.E."/>
            <person name="Hansen L.K."/>
            <person name="Larsen R.L."/>
            <person name="Riise B.W."/>
            <person name="Smalaas A.O."/>
            <person name="Hough E."/>
            <person name="Grinde B."/>
        </authorList>
    </citation>
    <scope>X-RAY CRYSTALLOGRAPHY (1.8 ANGSTROMS)</scope>
</reference>
<reference key="7">
    <citation type="journal article" date="1999" name="Acta Crystallogr. D">
        <title>Structural studies on the binding of 4-methylumbelliferone glycosides of chitin to rainbow trout lysozyme.</title>
        <authorList>
            <person name="Vollan V.B."/>
            <person name="Hough E."/>
            <person name="Karlsen S."/>
        </authorList>
    </citation>
    <scope>X-RAY CRYSTALLOGRAPHY (2.0 ANGSTROMS)</scope>
</reference>
<organism>
    <name type="scientific">Oncorhynchus mykiss</name>
    <name type="common">Rainbow trout</name>
    <name type="synonym">Salmo gairdneri</name>
    <dbReference type="NCBI Taxonomy" id="8022"/>
    <lineage>
        <taxon>Eukaryota</taxon>
        <taxon>Metazoa</taxon>
        <taxon>Chordata</taxon>
        <taxon>Craniata</taxon>
        <taxon>Vertebrata</taxon>
        <taxon>Euteleostomi</taxon>
        <taxon>Actinopterygii</taxon>
        <taxon>Neopterygii</taxon>
        <taxon>Teleostei</taxon>
        <taxon>Protacanthopterygii</taxon>
        <taxon>Salmoniformes</taxon>
        <taxon>Salmonidae</taxon>
        <taxon>Salmoninae</taxon>
        <taxon>Oncorhynchus</taxon>
    </lineage>
</organism>
<sequence length="144" mass="15737">MRAVVVLLLVAVASAKVYDRCELARALKASGMDGYAGNSLPNWVCLSKWESSYNTQATNRNTDGSTDYGIFQINSRYWCDDGRTPGAKNVCGIRCSQLLTADLTVAIRCAKRVVLDPNGIGAWVAWRLHCQNQDLRSYVAGCGV</sequence>